<reference evidence="3" key="1">
    <citation type="submission" date="2008-07" db="UniProtKB">
        <authorList>
            <person name="Sabater Jara A.B."/>
            <person name="Almagro L."/>
            <person name="Pedreno M.A."/>
        </authorList>
    </citation>
    <scope>PROTEIN SEQUENCE</scope>
</reference>
<feature type="chain" id="PRO_0000363729" description="Suberization-associated anionic peroxidase 2">
    <location>
        <begin position="1" status="less than"/>
        <end position="12" status="greater than"/>
    </location>
</feature>
<feature type="unsure residue" description="I or L">
    <location>
        <position position="7"/>
    </location>
</feature>
<feature type="non-terminal residue">
    <location>
        <position position="1"/>
    </location>
</feature>
<feature type="non-terminal residue">
    <location>
        <position position="12"/>
    </location>
</feature>
<keyword id="KW-0106">Calcium</keyword>
<keyword id="KW-0903">Direct protein sequencing</keyword>
<keyword id="KW-0349">Heme</keyword>
<keyword id="KW-0376">Hydrogen peroxide</keyword>
<keyword id="KW-0408">Iron</keyword>
<keyword id="KW-0479">Metal-binding</keyword>
<keyword id="KW-0560">Oxidoreductase</keyword>
<keyword id="KW-0575">Peroxidase</keyword>
<keyword id="KW-0964">Secreted</keyword>
<name>PER2_CAPAN</name>
<comment type="function">
    <text evidence="3">Removal of H(2)O(2), oxidation of toxic reductants, biosynthesis and degradation of lignin, suberization, auxin catabolism, response to environmental stresses such as wounding, pathogen attack and oxidative stress. These functions might be dependent on each isozyme/isoform in each plant tissue.</text>
</comment>
<comment type="function">
    <text evidence="1">Suggested to catalyze the deposition of the aromatic residues of suberin on the cell wall and thus play a role in cell-suberization.</text>
</comment>
<comment type="catalytic activity">
    <reaction>
        <text>2 a phenolic donor + H2O2 = 2 a phenolic radical donor + 2 H2O</text>
        <dbReference type="Rhea" id="RHEA:56136"/>
        <dbReference type="ChEBI" id="CHEBI:15377"/>
        <dbReference type="ChEBI" id="CHEBI:16240"/>
        <dbReference type="ChEBI" id="CHEBI:139520"/>
        <dbReference type="ChEBI" id="CHEBI:139521"/>
        <dbReference type="EC" id="1.11.1.7"/>
    </reaction>
</comment>
<comment type="cofactor">
    <cofactor evidence="1 2">
        <name>heme b</name>
        <dbReference type="ChEBI" id="CHEBI:60344"/>
    </cofactor>
    <text evidence="1 2">Binds 1 heme b (iron(II)-protoporphyrin IX) group per subunit.</text>
</comment>
<comment type="cofactor">
    <cofactor evidence="1 2">
        <name>Ca(2+)</name>
        <dbReference type="ChEBI" id="CHEBI:29108"/>
    </cofactor>
    <text evidence="1 2">Binds 2 calcium ions per subunit.</text>
</comment>
<comment type="subcellular location">
    <subcellularLocation>
        <location evidence="1 2">Secreted</location>
    </subcellularLocation>
</comment>
<comment type="similarity">
    <text evidence="2">Belongs to the peroxidase family. Classical plant (class III) peroxidase subfamily.</text>
</comment>
<proteinExistence type="evidence at protein level"/>
<organism>
    <name type="scientific">Capsicum annuum</name>
    <name type="common">Capsicum pepper</name>
    <dbReference type="NCBI Taxonomy" id="4072"/>
    <lineage>
        <taxon>Eukaryota</taxon>
        <taxon>Viridiplantae</taxon>
        <taxon>Streptophyta</taxon>
        <taxon>Embryophyta</taxon>
        <taxon>Tracheophyta</taxon>
        <taxon>Spermatophyta</taxon>
        <taxon>Magnoliopsida</taxon>
        <taxon>eudicotyledons</taxon>
        <taxon>Gunneridae</taxon>
        <taxon>Pentapetalae</taxon>
        <taxon>asterids</taxon>
        <taxon>lamiids</taxon>
        <taxon>Solanales</taxon>
        <taxon>Solanaceae</taxon>
        <taxon>Solanoideae</taxon>
        <taxon>Capsiceae</taxon>
        <taxon>Capsicum</taxon>
    </lineage>
</organism>
<accession>P86000</accession>
<protein>
    <recommendedName>
        <fullName evidence="1">Suberization-associated anionic peroxidase 2</fullName>
        <ecNumber>1.11.1.7</ecNumber>
    </recommendedName>
</protein>
<dbReference type="EC" id="1.11.1.7"/>
<dbReference type="GO" id="GO:0005576">
    <property type="term" value="C:extracellular region"/>
    <property type="evidence" value="ECO:0007669"/>
    <property type="project" value="UniProtKB-SubCell"/>
</dbReference>
<dbReference type="GO" id="GO:0140825">
    <property type="term" value="F:lactoperoxidase activity"/>
    <property type="evidence" value="ECO:0007669"/>
    <property type="project" value="UniProtKB-EC"/>
</dbReference>
<dbReference type="GO" id="GO:0046872">
    <property type="term" value="F:metal ion binding"/>
    <property type="evidence" value="ECO:0007669"/>
    <property type="project" value="UniProtKB-KW"/>
</dbReference>
<dbReference type="GO" id="GO:0042744">
    <property type="term" value="P:hydrogen peroxide catabolic process"/>
    <property type="evidence" value="ECO:0007669"/>
    <property type="project" value="UniProtKB-KW"/>
</dbReference>
<sequence length="12" mass="1232">GVVDSAIDAETR</sequence>
<evidence type="ECO:0000250" key="1">
    <source>
        <dbReference type="UniProtKB" id="P15004"/>
    </source>
</evidence>
<evidence type="ECO:0000255" key="2">
    <source>
        <dbReference type="PROSITE-ProRule" id="PRU00297"/>
    </source>
</evidence>
<evidence type="ECO:0000305" key="3"/>